<protein>
    <recommendedName>
        <fullName>SPbeta prophage-derived uncharacterized protein YoqH</fullName>
    </recommendedName>
</protein>
<feature type="signal peptide" evidence="1">
    <location>
        <begin position="1"/>
        <end position="23"/>
    </location>
</feature>
<feature type="chain" id="PRO_0000370260" description="SPbeta prophage-derived uncharacterized protein YoqH">
    <location>
        <begin position="24"/>
        <end position="150"/>
    </location>
</feature>
<keyword id="KW-1185">Reference proteome</keyword>
<keyword id="KW-0732">Signal</keyword>
<name>YOQH_BACSU</name>
<dbReference type="EMBL" id="AL009126">
    <property type="protein sequence ID" value="CAB13955.1"/>
    <property type="molecule type" value="Genomic_DNA"/>
</dbReference>
<dbReference type="RefSeq" id="NP_389945.1">
    <property type="nucleotide sequence ID" value="NC_000964.3"/>
</dbReference>
<dbReference type="RefSeq" id="WP_009967496.1">
    <property type="nucleotide sequence ID" value="NZ_OZ025638.1"/>
</dbReference>
<dbReference type="FunCoup" id="O34999">
    <property type="interactions" value="12"/>
</dbReference>
<dbReference type="STRING" id="224308.BSU20630"/>
<dbReference type="PaxDb" id="224308-BSU20630"/>
<dbReference type="DNASU" id="939438"/>
<dbReference type="EnsemblBacteria" id="CAB13955">
    <property type="protein sequence ID" value="CAB13955"/>
    <property type="gene ID" value="BSU_20630"/>
</dbReference>
<dbReference type="GeneID" id="939438"/>
<dbReference type="KEGG" id="bsu:BSU20630"/>
<dbReference type="PATRIC" id="fig|224308.179.peg.2253"/>
<dbReference type="eggNOG" id="COG1388">
    <property type="taxonomic scope" value="Bacteria"/>
</dbReference>
<dbReference type="InParanoid" id="O34999"/>
<dbReference type="OrthoDB" id="2439167at2"/>
<dbReference type="BioCyc" id="BSUB:BSU20630-MONOMER"/>
<dbReference type="Proteomes" id="UP000001570">
    <property type="component" value="Chromosome"/>
</dbReference>
<proteinExistence type="inferred from homology"/>
<sequence>MKRFILVLSFLSIIVAYPIQTNASPMPCSVILEPVDKNLKNAKGVALIYKVQLNPPSAARTNISILAVHLPAPSSFGNYDSYEGFATKPGEISWRFKLYPTPEEESPSWAGRIDTISAEMKNVKVQVRLSNSSTQKLGPSILTKNIESCY</sequence>
<organism>
    <name type="scientific">Bacillus subtilis (strain 168)</name>
    <dbReference type="NCBI Taxonomy" id="224308"/>
    <lineage>
        <taxon>Bacteria</taxon>
        <taxon>Bacillati</taxon>
        <taxon>Bacillota</taxon>
        <taxon>Bacilli</taxon>
        <taxon>Bacillales</taxon>
        <taxon>Bacillaceae</taxon>
        <taxon>Bacillus</taxon>
    </lineage>
</organism>
<gene>
    <name type="primary">yoqH</name>
    <name type="ordered locus">BSU20630</name>
</gene>
<accession>O34999</accession>
<evidence type="ECO:0000255" key="1"/>
<reference key="1">
    <citation type="journal article" date="1997" name="Nature">
        <title>The complete genome sequence of the Gram-positive bacterium Bacillus subtilis.</title>
        <authorList>
            <person name="Kunst F."/>
            <person name="Ogasawara N."/>
            <person name="Moszer I."/>
            <person name="Albertini A.M."/>
            <person name="Alloni G."/>
            <person name="Azevedo V."/>
            <person name="Bertero M.G."/>
            <person name="Bessieres P."/>
            <person name="Bolotin A."/>
            <person name="Borchert S."/>
            <person name="Borriss R."/>
            <person name="Boursier L."/>
            <person name="Brans A."/>
            <person name="Braun M."/>
            <person name="Brignell S.C."/>
            <person name="Bron S."/>
            <person name="Brouillet S."/>
            <person name="Bruschi C.V."/>
            <person name="Caldwell B."/>
            <person name="Capuano V."/>
            <person name="Carter N.M."/>
            <person name="Choi S.-K."/>
            <person name="Codani J.-J."/>
            <person name="Connerton I.F."/>
            <person name="Cummings N.J."/>
            <person name="Daniel R.A."/>
            <person name="Denizot F."/>
            <person name="Devine K.M."/>
            <person name="Duesterhoeft A."/>
            <person name="Ehrlich S.D."/>
            <person name="Emmerson P.T."/>
            <person name="Entian K.-D."/>
            <person name="Errington J."/>
            <person name="Fabret C."/>
            <person name="Ferrari E."/>
            <person name="Foulger D."/>
            <person name="Fritz C."/>
            <person name="Fujita M."/>
            <person name="Fujita Y."/>
            <person name="Fuma S."/>
            <person name="Galizzi A."/>
            <person name="Galleron N."/>
            <person name="Ghim S.-Y."/>
            <person name="Glaser P."/>
            <person name="Goffeau A."/>
            <person name="Golightly E.J."/>
            <person name="Grandi G."/>
            <person name="Guiseppi G."/>
            <person name="Guy B.J."/>
            <person name="Haga K."/>
            <person name="Haiech J."/>
            <person name="Harwood C.R."/>
            <person name="Henaut A."/>
            <person name="Hilbert H."/>
            <person name="Holsappel S."/>
            <person name="Hosono S."/>
            <person name="Hullo M.-F."/>
            <person name="Itaya M."/>
            <person name="Jones L.-M."/>
            <person name="Joris B."/>
            <person name="Karamata D."/>
            <person name="Kasahara Y."/>
            <person name="Klaerr-Blanchard M."/>
            <person name="Klein C."/>
            <person name="Kobayashi Y."/>
            <person name="Koetter P."/>
            <person name="Koningstein G."/>
            <person name="Krogh S."/>
            <person name="Kumano M."/>
            <person name="Kurita K."/>
            <person name="Lapidus A."/>
            <person name="Lardinois S."/>
            <person name="Lauber J."/>
            <person name="Lazarevic V."/>
            <person name="Lee S.-M."/>
            <person name="Levine A."/>
            <person name="Liu H."/>
            <person name="Masuda S."/>
            <person name="Mauel C."/>
            <person name="Medigue C."/>
            <person name="Medina N."/>
            <person name="Mellado R.P."/>
            <person name="Mizuno M."/>
            <person name="Moestl D."/>
            <person name="Nakai S."/>
            <person name="Noback M."/>
            <person name="Noone D."/>
            <person name="O'Reilly M."/>
            <person name="Ogawa K."/>
            <person name="Ogiwara A."/>
            <person name="Oudega B."/>
            <person name="Park S.-H."/>
            <person name="Parro V."/>
            <person name="Pohl T.M."/>
            <person name="Portetelle D."/>
            <person name="Porwollik S."/>
            <person name="Prescott A.M."/>
            <person name="Presecan E."/>
            <person name="Pujic P."/>
            <person name="Purnelle B."/>
            <person name="Rapoport G."/>
            <person name="Rey M."/>
            <person name="Reynolds S."/>
            <person name="Rieger M."/>
            <person name="Rivolta C."/>
            <person name="Rocha E."/>
            <person name="Roche B."/>
            <person name="Rose M."/>
            <person name="Sadaie Y."/>
            <person name="Sato T."/>
            <person name="Scanlan E."/>
            <person name="Schleich S."/>
            <person name="Schroeter R."/>
            <person name="Scoffone F."/>
            <person name="Sekiguchi J."/>
            <person name="Sekowska A."/>
            <person name="Seror S.J."/>
            <person name="Serror P."/>
            <person name="Shin B.-S."/>
            <person name="Soldo B."/>
            <person name="Sorokin A."/>
            <person name="Tacconi E."/>
            <person name="Takagi T."/>
            <person name="Takahashi H."/>
            <person name="Takemaru K."/>
            <person name="Takeuchi M."/>
            <person name="Tamakoshi A."/>
            <person name="Tanaka T."/>
            <person name="Terpstra P."/>
            <person name="Tognoni A."/>
            <person name="Tosato V."/>
            <person name="Uchiyama S."/>
            <person name="Vandenbol M."/>
            <person name="Vannier F."/>
            <person name="Vassarotti A."/>
            <person name="Viari A."/>
            <person name="Wambutt R."/>
            <person name="Wedler E."/>
            <person name="Wedler H."/>
            <person name="Weitzenegger T."/>
            <person name="Winters P."/>
            <person name="Wipat A."/>
            <person name="Yamamoto H."/>
            <person name="Yamane K."/>
            <person name="Yasumoto K."/>
            <person name="Yata K."/>
            <person name="Yoshida K."/>
            <person name="Yoshikawa H.-F."/>
            <person name="Zumstein E."/>
            <person name="Yoshikawa H."/>
            <person name="Danchin A."/>
        </authorList>
    </citation>
    <scope>NUCLEOTIDE SEQUENCE [LARGE SCALE GENOMIC DNA]</scope>
    <source>
        <strain>168</strain>
    </source>
</reference>